<evidence type="ECO:0000305" key="1"/>
<evidence type="ECO:0007829" key="2">
    <source>
        <dbReference type="PDB" id="2HY5"/>
    </source>
</evidence>
<feature type="chain" id="PRO_0000214879" description="Intracellular sulfur oxidation protein DsrF">
    <location>
        <begin position="1"/>
        <end position="136"/>
    </location>
</feature>
<feature type="strand" evidence="2">
    <location>
        <begin position="7"/>
        <end position="12"/>
    </location>
</feature>
<feature type="turn" evidence="2">
    <location>
        <begin position="16"/>
        <end position="18"/>
    </location>
</feature>
<feature type="helix" evidence="2">
    <location>
        <begin position="21"/>
        <end position="32"/>
    </location>
</feature>
<feature type="helix" evidence="2">
    <location>
        <begin position="33"/>
        <end position="35"/>
    </location>
</feature>
<feature type="strand" evidence="2">
    <location>
        <begin position="38"/>
        <end position="43"/>
    </location>
</feature>
<feature type="helix" evidence="2">
    <location>
        <begin position="45"/>
        <end position="51"/>
    </location>
</feature>
<feature type="helix" evidence="2">
    <location>
        <begin position="58"/>
        <end position="60"/>
    </location>
</feature>
<feature type="helix" evidence="2">
    <location>
        <begin position="66"/>
        <end position="75"/>
    </location>
</feature>
<feature type="strand" evidence="2">
    <location>
        <begin position="79"/>
        <end position="83"/>
    </location>
</feature>
<feature type="helix" evidence="2">
    <location>
        <begin position="84"/>
        <end position="89"/>
    </location>
</feature>
<feature type="helix" evidence="2">
    <location>
        <begin position="94"/>
        <end position="96"/>
    </location>
</feature>
<feature type="turn" evidence="2">
    <location>
        <begin position="105"/>
        <end position="107"/>
    </location>
</feature>
<feature type="strand" evidence="2">
    <location>
        <begin position="110"/>
        <end position="112"/>
    </location>
</feature>
<feature type="strand" evidence="2">
    <location>
        <begin position="115"/>
        <end position="118"/>
    </location>
</feature>
<feature type="helix" evidence="2">
    <location>
        <begin position="120"/>
        <end position="129"/>
    </location>
</feature>
<feature type="strand" evidence="2">
    <location>
        <begin position="131"/>
        <end position="135"/>
    </location>
</feature>
<accession>O87897</accession>
<accession>D3RSN4</accession>
<protein>
    <recommendedName>
        <fullName>Intracellular sulfur oxidation protein DsrF</fullName>
    </recommendedName>
</protein>
<proteinExistence type="evidence at protein level"/>
<comment type="function">
    <text>Not known. Could be involved in the oxidation of intracellular sulfur.</text>
</comment>
<comment type="similarity">
    <text evidence="1">Belongs to the DsrF/TusC family.</text>
</comment>
<sequence>MSEVVKKFMYLNRKAPYGTIYAWEALEVVLIGAAFDQDVCVLFLDDGVYQLTRGQDTKGIGMKNFSPTYRTLGDYEVRRIYVDRDSLEARGLTQDDLVEIAFEDMETEEEFDNIVEVIDSARVSELMNESDAVFSF</sequence>
<dbReference type="EMBL" id="U84760">
    <property type="protein sequence ID" value="AAC35397.1"/>
    <property type="molecule type" value="Genomic_DNA"/>
</dbReference>
<dbReference type="EMBL" id="CP001896">
    <property type="protein sequence ID" value="ADC62193.1"/>
    <property type="molecule type" value="Genomic_DNA"/>
</dbReference>
<dbReference type="RefSeq" id="WP_012970467.1">
    <property type="nucleotide sequence ID" value="NC_013851.1"/>
</dbReference>
<dbReference type="PDB" id="2HY5">
    <property type="method" value="X-ray"/>
    <property type="resolution" value="1.72 A"/>
    <property type="chains" value="B=1-136"/>
</dbReference>
<dbReference type="PDB" id="2HYB">
    <property type="method" value="X-ray"/>
    <property type="resolution" value="2.50 A"/>
    <property type="chains" value="B/E/H/K/N/Q=1-136"/>
</dbReference>
<dbReference type="PDBsum" id="2HY5"/>
<dbReference type="PDBsum" id="2HYB"/>
<dbReference type="SMR" id="O87897"/>
<dbReference type="STRING" id="572477.Alvin_1254"/>
<dbReference type="KEGG" id="alv:Alvin_1254"/>
<dbReference type="eggNOG" id="COG2923">
    <property type="taxonomic scope" value="Bacteria"/>
</dbReference>
<dbReference type="HOGENOM" id="CLU_155943_0_0_6"/>
<dbReference type="OrthoDB" id="9789418at2"/>
<dbReference type="BioCyc" id="MetaCyc:MONOMER-16055"/>
<dbReference type="EvolutionaryTrace" id="O87897"/>
<dbReference type="Proteomes" id="UP000001441">
    <property type="component" value="Chromosome"/>
</dbReference>
<dbReference type="Gene3D" id="3.40.1260.10">
    <property type="entry name" value="DsrEFH-like"/>
    <property type="match status" value="1"/>
</dbReference>
<dbReference type="InterPro" id="IPR027396">
    <property type="entry name" value="DsrEFH-like"/>
</dbReference>
<dbReference type="InterPro" id="IPR003787">
    <property type="entry name" value="Sulphur_relay_DsrE/F-like"/>
</dbReference>
<dbReference type="InterPro" id="IPR017462">
    <property type="entry name" value="Sulphur_relay_TusC/DsrF"/>
</dbReference>
<dbReference type="NCBIfam" id="NF001238">
    <property type="entry name" value="PRK00211.1"/>
    <property type="match status" value="1"/>
</dbReference>
<dbReference type="NCBIfam" id="TIGR03010">
    <property type="entry name" value="sulf_tusC_dsrF"/>
    <property type="match status" value="1"/>
</dbReference>
<dbReference type="PANTHER" id="PTHR38780">
    <property type="entry name" value="PROTEIN TUSC"/>
    <property type="match status" value="1"/>
</dbReference>
<dbReference type="PANTHER" id="PTHR38780:SF1">
    <property type="entry name" value="PROTEIN TUSC"/>
    <property type="match status" value="1"/>
</dbReference>
<dbReference type="Pfam" id="PF02635">
    <property type="entry name" value="DsrE"/>
    <property type="match status" value="1"/>
</dbReference>
<dbReference type="SUPFAM" id="SSF75169">
    <property type="entry name" value="DsrEFH-like"/>
    <property type="match status" value="1"/>
</dbReference>
<organism>
    <name type="scientific">Allochromatium vinosum (strain ATCC 17899 / DSM 180 / NBRC 103801 / NCIMB 10441 / D)</name>
    <name type="common">Chromatium vinosum</name>
    <dbReference type="NCBI Taxonomy" id="572477"/>
    <lineage>
        <taxon>Bacteria</taxon>
        <taxon>Pseudomonadati</taxon>
        <taxon>Pseudomonadota</taxon>
        <taxon>Gammaproteobacteria</taxon>
        <taxon>Chromatiales</taxon>
        <taxon>Chromatiaceae</taxon>
        <taxon>Allochromatium</taxon>
    </lineage>
</organism>
<keyword id="KW-0002">3D-structure</keyword>
<keyword id="KW-1185">Reference proteome</keyword>
<reference key="1">
    <citation type="journal article" date="1998" name="Microbiology">
        <title>Sirohaem sulfite reductase and other proteins encoded by genes at the dsr locus of Chromatium vinosum are involved in the oxidation of intracellular sulfur.</title>
        <authorList>
            <person name="Pott A.S."/>
            <person name="Dahl C."/>
        </authorList>
    </citation>
    <scope>NUCLEOTIDE SEQUENCE [GENOMIC DNA]</scope>
</reference>
<reference key="2">
    <citation type="journal article" date="2011" name="Stand. Genomic Sci.">
        <title>Complete genome sequence of Allochromatium vinosum DSM 180(T).</title>
        <authorList>
            <person name="Weissgerber T."/>
            <person name="Zigann R."/>
            <person name="Bruce D."/>
            <person name="Chang Y.J."/>
            <person name="Detter J.C."/>
            <person name="Han C."/>
            <person name="Hauser L."/>
            <person name="Jeffries C.D."/>
            <person name="Land M."/>
            <person name="Munk A.C."/>
            <person name="Tapia R."/>
            <person name="Dahl C."/>
        </authorList>
    </citation>
    <scope>NUCLEOTIDE SEQUENCE [LARGE SCALE GENOMIC DNA]</scope>
    <source>
        <strain>ATCC 17899 / DSM 180 / NBRC 103801 / NCIMB 10441 / D</strain>
    </source>
</reference>
<name>DSRF_ALLVD</name>
<gene>
    <name type="primary">dsrF</name>
    <name type="ordered locus">Alvin_1254</name>
</gene>